<keyword id="KW-0143">Chaperone</keyword>
<keyword id="KW-0963">Cytoplasm</keyword>
<keyword id="KW-0653">Protein transport</keyword>
<keyword id="KW-1185">Reference proteome</keyword>
<keyword id="KW-0811">Translocation</keyword>
<keyword id="KW-0813">Transport</keyword>
<protein>
    <recommendedName>
        <fullName evidence="1">Protein-export protein SecB</fullName>
    </recommendedName>
</protein>
<accession>Q7MY53</accession>
<dbReference type="EMBL" id="BX571875">
    <property type="protein sequence ID" value="CAE17211.1"/>
    <property type="molecule type" value="Genomic_DNA"/>
</dbReference>
<dbReference type="RefSeq" id="WP_011148898.1">
    <property type="nucleotide sequence ID" value="NC_005126.1"/>
</dbReference>
<dbReference type="SMR" id="Q7MY53"/>
<dbReference type="STRING" id="243265.plu4839"/>
<dbReference type="GeneID" id="48851067"/>
<dbReference type="KEGG" id="plu:plu4839"/>
<dbReference type="eggNOG" id="COG1952">
    <property type="taxonomic scope" value="Bacteria"/>
</dbReference>
<dbReference type="HOGENOM" id="CLU_111574_1_0_6"/>
<dbReference type="OrthoDB" id="9795145at2"/>
<dbReference type="Proteomes" id="UP000002514">
    <property type="component" value="Chromosome"/>
</dbReference>
<dbReference type="GO" id="GO:0005737">
    <property type="term" value="C:cytoplasm"/>
    <property type="evidence" value="ECO:0007669"/>
    <property type="project" value="UniProtKB-SubCell"/>
</dbReference>
<dbReference type="GO" id="GO:0051082">
    <property type="term" value="F:unfolded protein binding"/>
    <property type="evidence" value="ECO:0007669"/>
    <property type="project" value="InterPro"/>
</dbReference>
<dbReference type="GO" id="GO:0006457">
    <property type="term" value="P:protein folding"/>
    <property type="evidence" value="ECO:0007669"/>
    <property type="project" value="UniProtKB-UniRule"/>
</dbReference>
<dbReference type="GO" id="GO:0051262">
    <property type="term" value="P:protein tetramerization"/>
    <property type="evidence" value="ECO:0007669"/>
    <property type="project" value="InterPro"/>
</dbReference>
<dbReference type="GO" id="GO:0015031">
    <property type="term" value="P:protein transport"/>
    <property type="evidence" value="ECO:0007669"/>
    <property type="project" value="UniProtKB-UniRule"/>
</dbReference>
<dbReference type="CDD" id="cd00557">
    <property type="entry name" value="Translocase_SecB"/>
    <property type="match status" value="1"/>
</dbReference>
<dbReference type="FunFam" id="3.10.420.10:FF:000001">
    <property type="entry name" value="Protein-export chaperone SecB"/>
    <property type="match status" value="1"/>
</dbReference>
<dbReference type="Gene3D" id="3.10.420.10">
    <property type="entry name" value="SecB-like"/>
    <property type="match status" value="1"/>
</dbReference>
<dbReference type="HAMAP" id="MF_00821">
    <property type="entry name" value="SecB"/>
    <property type="match status" value="1"/>
</dbReference>
<dbReference type="InterPro" id="IPR003708">
    <property type="entry name" value="SecB"/>
</dbReference>
<dbReference type="InterPro" id="IPR035958">
    <property type="entry name" value="SecB-like_sf"/>
</dbReference>
<dbReference type="NCBIfam" id="NF004390">
    <property type="entry name" value="PRK05751.1-1"/>
    <property type="match status" value="1"/>
</dbReference>
<dbReference type="NCBIfam" id="NF004393">
    <property type="entry name" value="PRK05751.1-4"/>
    <property type="match status" value="1"/>
</dbReference>
<dbReference type="NCBIfam" id="TIGR00809">
    <property type="entry name" value="secB"/>
    <property type="match status" value="1"/>
</dbReference>
<dbReference type="PANTHER" id="PTHR36918">
    <property type="match status" value="1"/>
</dbReference>
<dbReference type="PANTHER" id="PTHR36918:SF1">
    <property type="entry name" value="PROTEIN-EXPORT PROTEIN SECB"/>
    <property type="match status" value="1"/>
</dbReference>
<dbReference type="Pfam" id="PF02556">
    <property type="entry name" value="SecB"/>
    <property type="match status" value="1"/>
</dbReference>
<dbReference type="PRINTS" id="PR01594">
    <property type="entry name" value="SECBCHAPRONE"/>
</dbReference>
<dbReference type="SUPFAM" id="SSF54611">
    <property type="entry name" value="SecB-like"/>
    <property type="match status" value="1"/>
</dbReference>
<comment type="function">
    <text evidence="1">One of the proteins required for the normal export of preproteins out of the cell cytoplasm. It is a molecular chaperone that binds to a subset of precursor proteins, maintaining them in a translocation-competent state. It also specifically binds to its receptor SecA.</text>
</comment>
<comment type="subunit">
    <text evidence="1">Homotetramer, a dimer of dimers. One homotetramer interacts with 1 SecA dimer.</text>
</comment>
<comment type="subcellular location">
    <subcellularLocation>
        <location evidence="1">Cytoplasm</location>
    </subcellularLocation>
</comment>
<comment type="similarity">
    <text evidence="1">Belongs to the SecB family.</text>
</comment>
<sequence>MSEQSNTEMAFQIQRIYTKDISFEAPNAPQVFQQEWQPEVKLDLDTASSELAQGVYEVVLRVTVTAALGEETAFLCEVQQGGIFSIDGIEGTQLAHCLGAYCPNILFPYARECITSLVSRGTFPQLNLAPVNFDALFMNYLQQQAEQSQGGEQTEQEA</sequence>
<organism>
    <name type="scientific">Photorhabdus laumondii subsp. laumondii (strain DSM 15139 / CIP 105565 / TT01)</name>
    <name type="common">Photorhabdus luminescens subsp. laumondii</name>
    <dbReference type="NCBI Taxonomy" id="243265"/>
    <lineage>
        <taxon>Bacteria</taxon>
        <taxon>Pseudomonadati</taxon>
        <taxon>Pseudomonadota</taxon>
        <taxon>Gammaproteobacteria</taxon>
        <taxon>Enterobacterales</taxon>
        <taxon>Morganellaceae</taxon>
        <taxon>Photorhabdus</taxon>
    </lineage>
</organism>
<feature type="chain" id="PRO_0000055393" description="Protein-export protein SecB">
    <location>
        <begin position="1"/>
        <end position="158"/>
    </location>
</feature>
<reference key="1">
    <citation type="journal article" date="2003" name="Nat. Biotechnol.">
        <title>The genome sequence of the entomopathogenic bacterium Photorhabdus luminescens.</title>
        <authorList>
            <person name="Duchaud E."/>
            <person name="Rusniok C."/>
            <person name="Frangeul L."/>
            <person name="Buchrieser C."/>
            <person name="Givaudan A."/>
            <person name="Taourit S."/>
            <person name="Bocs S."/>
            <person name="Boursaux-Eude C."/>
            <person name="Chandler M."/>
            <person name="Charles J.-F."/>
            <person name="Dassa E."/>
            <person name="Derose R."/>
            <person name="Derzelle S."/>
            <person name="Freyssinet G."/>
            <person name="Gaudriault S."/>
            <person name="Medigue C."/>
            <person name="Lanois A."/>
            <person name="Powell K."/>
            <person name="Siguier P."/>
            <person name="Vincent R."/>
            <person name="Wingate V."/>
            <person name="Zouine M."/>
            <person name="Glaser P."/>
            <person name="Boemare N."/>
            <person name="Danchin A."/>
            <person name="Kunst F."/>
        </authorList>
    </citation>
    <scope>NUCLEOTIDE SEQUENCE [LARGE SCALE GENOMIC DNA]</scope>
    <source>
        <strain>DSM 15139 / CIP 105565 / TT01</strain>
    </source>
</reference>
<name>SECB_PHOLL</name>
<proteinExistence type="inferred from homology"/>
<gene>
    <name evidence="1" type="primary">secB</name>
    <name type="ordered locus">plu4839</name>
</gene>
<evidence type="ECO:0000255" key="1">
    <source>
        <dbReference type="HAMAP-Rule" id="MF_00821"/>
    </source>
</evidence>